<name>GREA_HELP2</name>
<comment type="function">
    <text evidence="1">Necessary for efficient RNA polymerase transcription elongation past template-encoded arresting sites. The arresting sites in DNA have the property of trapping a certain fraction of elongating RNA polymerases that pass through, resulting in locked ternary complexes. Cleavage of the nascent transcript by cleavage factors such as GreA or GreB allows the resumption of elongation from the new 3'terminus. GreA releases sequences of 2 to 3 nucleotides.</text>
</comment>
<comment type="similarity">
    <text evidence="1">Belongs to the GreA/GreB family.</text>
</comment>
<organism>
    <name type="scientific">Helicobacter pylori (strain P12)</name>
    <dbReference type="NCBI Taxonomy" id="570508"/>
    <lineage>
        <taxon>Bacteria</taxon>
        <taxon>Pseudomonadati</taxon>
        <taxon>Campylobacterota</taxon>
        <taxon>Epsilonproteobacteria</taxon>
        <taxon>Campylobacterales</taxon>
        <taxon>Helicobacteraceae</taxon>
        <taxon>Helicobacter</taxon>
    </lineage>
</organism>
<feature type="chain" id="PRO_1000094171" description="Transcription elongation factor GreA">
    <location>
        <begin position="1"/>
        <end position="164"/>
    </location>
</feature>
<reference key="1">
    <citation type="submission" date="2008-10" db="EMBL/GenBank/DDBJ databases">
        <title>The complete genome sequence of Helicobacter pylori strain P12.</title>
        <authorList>
            <person name="Fischer W."/>
            <person name="Windhager L."/>
            <person name="Karnholz A."/>
            <person name="Zeiller M."/>
            <person name="Zimmer R."/>
            <person name="Haas R."/>
        </authorList>
    </citation>
    <scope>NUCLEOTIDE SEQUENCE [LARGE SCALE GENOMIC DNA]</scope>
    <source>
        <strain>P12</strain>
    </source>
</reference>
<proteinExistence type="inferred from homology"/>
<protein>
    <recommendedName>
        <fullName evidence="1">Transcription elongation factor GreA</fullName>
    </recommendedName>
    <alternativeName>
        <fullName evidence="1">Transcript cleavage factor GreA</fullName>
    </alternativeName>
</protein>
<gene>
    <name evidence="1" type="primary">greA</name>
    <name type="ordered locus">HPP12_0866</name>
</gene>
<evidence type="ECO:0000255" key="1">
    <source>
        <dbReference type="HAMAP-Rule" id="MF_00105"/>
    </source>
</evidence>
<keyword id="KW-0238">DNA-binding</keyword>
<keyword id="KW-0804">Transcription</keyword>
<keyword id="KW-0805">Transcription regulation</keyword>
<accession>B6JM90</accession>
<dbReference type="EMBL" id="CP001217">
    <property type="protein sequence ID" value="ACJ08018.1"/>
    <property type="molecule type" value="Genomic_DNA"/>
</dbReference>
<dbReference type="SMR" id="B6JM90"/>
<dbReference type="KEGG" id="hpp:HPP12_0866"/>
<dbReference type="HOGENOM" id="CLU_101379_2_0_7"/>
<dbReference type="Proteomes" id="UP000008198">
    <property type="component" value="Chromosome"/>
</dbReference>
<dbReference type="GO" id="GO:0003677">
    <property type="term" value="F:DNA binding"/>
    <property type="evidence" value="ECO:0007669"/>
    <property type="project" value="UniProtKB-UniRule"/>
</dbReference>
<dbReference type="GO" id="GO:0070063">
    <property type="term" value="F:RNA polymerase binding"/>
    <property type="evidence" value="ECO:0007669"/>
    <property type="project" value="InterPro"/>
</dbReference>
<dbReference type="GO" id="GO:0006354">
    <property type="term" value="P:DNA-templated transcription elongation"/>
    <property type="evidence" value="ECO:0007669"/>
    <property type="project" value="TreeGrafter"/>
</dbReference>
<dbReference type="GO" id="GO:0032784">
    <property type="term" value="P:regulation of DNA-templated transcription elongation"/>
    <property type="evidence" value="ECO:0007669"/>
    <property type="project" value="UniProtKB-UniRule"/>
</dbReference>
<dbReference type="FunFam" id="1.10.287.180:FF:000001">
    <property type="entry name" value="Transcription elongation factor GreA"/>
    <property type="match status" value="1"/>
</dbReference>
<dbReference type="FunFam" id="3.10.50.30:FF:000001">
    <property type="entry name" value="Transcription elongation factor GreA"/>
    <property type="match status" value="1"/>
</dbReference>
<dbReference type="Gene3D" id="3.10.50.30">
    <property type="entry name" value="Transcription elongation factor, GreA/GreB, C-terminal domain"/>
    <property type="match status" value="1"/>
</dbReference>
<dbReference type="Gene3D" id="1.10.287.180">
    <property type="entry name" value="Transcription elongation factor, GreA/GreB, N-terminal domain"/>
    <property type="match status" value="1"/>
</dbReference>
<dbReference type="HAMAP" id="MF_00105">
    <property type="entry name" value="GreA_GreB"/>
    <property type="match status" value="1"/>
</dbReference>
<dbReference type="InterPro" id="IPR036953">
    <property type="entry name" value="GreA/GreB_C_sf"/>
</dbReference>
<dbReference type="InterPro" id="IPR018151">
    <property type="entry name" value="TF_GreA/GreB_CS"/>
</dbReference>
<dbReference type="InterPro" id="IPR006359">
    <property type="entry name" value="Tscrpt_elong_fac_GreA"/>
</dbReference>
<dbReference type="InterPro" id="IPR028624">
    <property type="entry name" value="Tscrpt_elong_fac_GreA/B"/>
</dbReference>
<dbReference type="InterPro" id="IPR001437">
    <property type="entry name" value="Tscrpt_elong_fac_GreA/B_C"/>
</dbReference>
<dbReference type="InterPro" id="IPR023459">
    <property type="entry name" value="Tscrpt_elong_fac_GreA/B_fam"/>
</dbReference>
<dbReference type="InterPro" id="IPR022691">
    <property type="entry name" value="Tscrpt_elong_fac_GreA/B_N"/>
</dbReference>
<dbReference type="InterPro" id="IPR036805">
    <property type="entry name" value="Tscrpt_elong_fac_GreA/B_N_sf"/>
</dbReference>
<dbReference type="NCBIfam" id="TIGR01462">
    <property type="entry name" value="greA"/>
    <property type="match status" value="1"/>
</dbReference>
<dbReference type="NCBIfam" id="NF001261">
    <property type="entry name" value="PRK00226.1-2"/>
    <property type="match status" value="1"/>
</dbReference>
<dbReference type="NCBIfam" id="NF001263">
    <property type="entry name" value="PRK00226.1-4"/>
    <property type="match status" value="1"/>
</dbReference>
<dbReference type="NCBIfam" id="NF001264">
    <property type="entry name" value="PRK00226.1-5"/>
    <property type="match status" value="1"/>
</dbReference>
<dbReference type="PANTHER" id="PTHR30437">
    <property type="entry name" value="TRANSCRIPTION ELONGATION FACTOR GREA"/>
    <property type="match status" value="1"/>
</dbReference>
<dbReference type="PANTHER" id="PTHR30437:SF4">
    <property type="entry name" value="TRANSCRIPTION ELONGATION FACTOR GREA"/>
    <property type="match status" value="1"/>
</dbReference>
<dbReference type="Pfam" id="PF01272">
    <property type="entry name" value="GreA_GreB"/>
    <property type="match status" value="1"/>
</dbReference>
<dbReference type="Pfam" id="PF03449">
    <property type="entry name" value="GreA_GreB_N"/>
    <property type="match status" value="1"/>
</dbReference>
<dbReference type="PIRSF" id="PIRSF006092">
    <property type="entry name" value="GreA_GreB"/>
    <property type="match status" value="1"/>
</dbReference>
<dbReference type="SUPFAM" id="SSF54534">
    <property type="entry name" value="FKBP-like"/>
    <property type="match status" value="1"/>
</dbReference>
<dbReference type="SUPFAM" id="SSF46557">
    <property type="entry name" value="GreA transcript cleavage protein, N-terminal domain"/>
    <property type="match status" value="1"/>
</dbReference>
<dbReference type="PROSITE" id="PS00829">
    <property type="entry name" value="GREAB_1"/>
    <property type="match status" value="1"/>
</dbReference>
<dbReference type="PROSITE" id="PS00830">
    <property type="entry name" value="GREAB_2"/>
    <property type="match status" value="1"/>
</dbReference>
<sequence>MNKEPMSMHGYNKICAELKQLKEVERPNIVKEIDIARGHGDLKENAEYHAAKEKQRFIEARIVDLSEIVANAQVIDPSVLAHNKVSFGSTIKILNLDNDKEFSYTIVGSVESDPAKGLISFGSPIAKSLIGKSKGDAVSIQLPNGESDFEILDIYYKEICFDEN</sequence>